<evidence type="ECO:0000255" key="1">
    <source>
        <dbReference type="HAMAP-Rule" id="MF_01540"/>
    </source>
</evidence>
<gene>
    <name evidence="1" type="primary">cysI</name>
    <name type="ordered locus">Dd703_0859</name>
</gene>
<name>CYSI_MUSP7</name>
<comment type="function">
    <text evidence="1">Component of the sulfite reductase complex that catalyzes the 6-electron reduction of sulfite to sulfide. This is one of several activities required for the biosynthesis of L-cysteine from sulfate.</text>
</comment>
<comment type="catalytic activity">
    <reaction evidence="1">
        <text>hydrogen sulfide + 3 NADP(+) + 3 H2O = sulfite + 3 NADPH + 4 H(+)</text>
        <dbReference type="Rhea" id="RHEA:13801"/>
        <dbReference type="ChEBI" id="CHEBI:15377"/>
        <dbReference type="ChEBI" id="CHEBI:15378"/>
        <dbReference type="ChEBI" id="CHEBI:17359"/>
        <dbReference type="ChEBI" id="CHEBI:29919"/>
        <dbReference type="ChEBI" id="CHEBI:57783"/>
        <dbReference type="ChEBI" id="CHEBI:58349"/>
        <dbReference type="EC" id="1.8.1.2"/>
    </reaction>
</comment>
<comment type="cofactor">
    <cofactor evidence="1">
        <name>siroheme</name>
        <dbReference type="ChEBI" id="CHEBI:60052"/>
    </cofactor>
    <text evidence="1">Binds 1 siroheme per subunit.</text>
</comment>
<comment type="cofactor">
    <cofactor evidence="1">
        <name>[4Fe-4S] cluster</name>
        <dbReference type="ChEBI" id="CHEBI:49883"/>
    </cofactor>
    <text evidence="1">Binds 1 [4Fe-4S] cluster per subunit.</text>
</comment>
<comment type="pathway">
    <text evidence="1">Sulfur metabolism; hydrogen sulfide biosynthesis; hydrogen sulfide from sulfite (NADPH route): step 1/1.</text>
</comment>
<comment type="subunit">
    <text evidence="1">Alpha(8)-beta(8). The alpha component is a flavoprotein, the beta component is a hemoprotein.</text>
</comment>
<comment type="similarity">
    <text evidence="1">Belongs to the nitrite and sulfite reductase 4Fe-4S domain family.</text>
</comment>
<keyword id="KW-0004">4Fe-4S</keyword>
<keyword id="KW-0028">Amino-acid biosynthesis</keyword>
<keyword id="KW-0198">Cysteine biosynthesis</keyword>
<keyword id="KW-0349">Heme</keyword>
<keyword id="KW-0408">Iron</keyword>
<keyword id="KW-0411">Iron-sulfur</keyword>
<keyword id="KW-0479">Metal-binding</keyword>
<keyword id="KW-0521">NADP</keyword>
<keyword id="KW-0560">Oxidoreductase</keyword>
<sequence>MSERYSGPLVVEGKLADAERLKQESHYLRGTIAEDLNDGLTGGFNGDNFLLIRFHGMYQQDDRDIRAERAEQKLEPRHAMMLRCRLPGGVMTPQQWLGIDKFAGENTLYGSIRITNRQTFQFHGILKSDLKSAHQLLHELGLDALATANDVNRNVLCTSNPVESELHSQAYEWAKRISEHLLPRTRAYAEIWLDQEKVAATDEEPILGPTYLPRKFKTTVVIPPQNDVDLHANDMNFVAIADNGRLVGFNVLVGGGLSIAHGDKATYPRTASELGYISVDHTLAIAEAVVTTQRDWGNRTNRKNAKTKYTLERVGIDTFRQEVERRAGVTFEPVRPYEFTGRGDRIGWVKGIDKKWHLTLFIENGRILDYPGRPLKTGMAEIAKIHKGDFRLTANQNLIVAGVASRDKASIEALARQYALMDDSVTEQRKNSMACVSLPTCPLAMAEAERFLPQFVTEVEAIMRNHGVGDEHIVLRVTGCPNGCGRALLAEIGLVGKAIGRYNLHLGGNREGTRIPRMYRENITEAEILREIDALVGRWAAERQPDEGFGDFAIRAGIVRPVLDPAVDFYD</sequence>
<dbReference type="EC" id="1.8.1.2" evidence="1"/>
<dbReference type="EMBL" id="CP001654">
    <property type="protein sequence ID" value="ACS84669.1"/>
    <property type="molecule type" value="Genomic_DNA"/>
</dbReference>
<dbReference type="RefSeq" id="WP_012764487.1">
    <property type="nucleotide sequence ID" value="NC_012880.1"/>
</dbReference>
<dbReference type="SMR" id="C6CAW9"/>
<dbReference type="STRING" id="579405.Dd703_0859"/>
<dbReference type="KEGG" id="dda:Dd703_0859"/>
<dbReference type="eggNOG" id="COG0155">
    <property type="taxonomic scope" value="Bacteria"/>
</dbReference>
<dbReference type="HOGENOM" id="CLU_001975_3_2_6"/>
<dbReference type="UniPathway" id="UPA00140">
    <property type="reaction ID" value="UER00207"/>
</dbReference>
<dbReference type="Proteomes" id="UP000002734">
    <property type="component" value="Chromosome"/>
</dbReference>
<dbReference type="GO" id="GO:0009337">
    <property type="term" value="C:sulfite reductase complex (NADPH)"/>
    <property type="evidence" value="ECO:0007669"/>
    <property type="project" value="InterPro"/>
</dbReference>
<dbReference type="GO" id="GO:0051539">
    <property type="term" value="F:4 iron, 4 sulfur cluster binding"/>
    <property type="evidence" value="ECO:0007669"/>
    <property type="project" value="UniProtKB-KW"/>
</dbReference>
<dbReference type="GO" id="GO:0020037">
    <property type="term" value="F:heme binding"/>
    <property type="evidence" value="ECO:0007669"/>
    <property type="project" value="InterPro"/>
</dbReference>
<dbReference type="GO" id="GO:0046872">
    <property type="term" value="F:metal ion binding"/>
    <property type="evidence" value="ECO:0007669"/>
    <property type="project" value="UniProtKB-KW"/>
</dbReference>
<dbReference type="GO" id="GO:0050661">
    <property type="term" value="F:NADP binding"/>
    <property type="evidence" value="ECO:0007669"/>
    <property type="project" value="InterPro"/>
</dbReference>
<dbReference type="GO" id="GO:0050311">
    <property type="term" value="F:sulfite reductase (ferredoxin) activity"/>
    <property type="evidence" value="ECO:0007669"/>
    <property type="project" value="TreeGrafter"/>
</dbReference>
<dbReference type="GO" id="GO:0004783">
    <property type="term" value="F:sulfite reductase (NADPH) activity"/>
    <property type="evidence" value="ECO:0007669"/>
    <property type="project" value="UniProtKB-UniRule"/>
</dbReference>
<dbReference type="GO" id="GO:0019344">
    <property type="term" value="P:cysteine biosynthetic process"/>
    <property type="evidence" value="ECO:0007669"/>
    <property type="project" value="UniProtKB-KW"/>
</dbReference>
<dbReference type="GO" id="GO:0070814">
    <property type="term" value="P:hydrogen sulfide biosynthetic process"/>
    <property type="evidence" value="ECO:0007669"/>
    <property type="project" value="UniProtKB-UniRule"/>
</dbReference>
<dbReference type="GO" id="GO:0000103">
    <property type="term" value="P:sulfate assimilation"/>
    <property type="evidence" value="ECO:0007669"/>
    <property type="project" value="UniProtKB-UniRule"/>
</dbReference>
<dbReference type="FunFam" id="3.30.413.10:FF:000003">
    <property type="entry name" value="Sulfite reductase [NADPH] hemoprotein beta-component"/>
    <property type="match status" value="1"/>
</dbReference>
<dbReference type="FunFam" id="3.30.413.10:FF:000004">
    <property type="entry name" value="Sulfite reductase [NADPH] hemoprotein beta-component"/>
    <property type="match status" value="1"/>
</dbReference>
<dbReference type="Gene3D" id="3.30.413.10">
    <property type="entry name" value="Sulfite Reductase Hemoprotein, domain 1"/>
    <property type="match status" value="2"/>
</dbReference>
<dbReference type="HAMAP" id="MF_01540">
    <property type="entry name" value="CysI"/>
    <property type="match status" value="1"/>
</dbReference>
<dbReference type="InterPro" id="IPR011786">
    <property type="entry name" value="CysI"/>
</dbReference>
<dbReference type="InterPro" id="IPR005117">
    <property type="entry name" value="NiRdtase/SiRdtase_haem-b_fer"/>
</dbReference>
<dbReference type="InterPro" id="IPR036136">
    <property type="entry name" value="Nit/Sulf_reduc_fer-like_dom_sf"/>
</dbReference>
<dbReference type="InterPro" id="IPR006067">
    <property type="entry name" value="NO2/SO3_Rdtase_4Fe4S_dom"/>
</dbReference>
<dbReference type="InterPro" id="IPR045169">
    <property type="entry name" value="NO2/SO3_Rdtase_4Fe4S_prot"/>
</dbReference>
<dbReference type="InterPro" id="IPR045854">
    <property type="entry name" value="NO2/SO3_Rdtase_4Fe4S_sf"/>
</dbReference>
<dbReference type="InterPro" id="IPR006066">
    <property type="entry name" value="NO2/SO3_Rdtase_FeS/sirohaem_BS"/>
</dbReference>
<dbReference type="NCBIfam" id="TIGR02041">
    <property type="entry name" value="CysI"/>
    <property type="match status" value="1"/>
</dbReference>
<dbReference type="NCBIfam" id="NF010029">
    <property type="entry name" value="PRK13504.1"/>
    <property type="match status" value="1"/>
</dbReference>
<dbReference type="PANTHER" id="PTHR11493:SF47">
    <property type="entry name" value="SULFITE REDUCTASE [NADPH] SUBUNIT BETA"/>
    <property type="match status" value="1"/>
</dbReference>
<dbReference type="PANTHER" id="PTHR11493">
    <property type="entry name" value="SULFITE REDUCTASE [NADPH] SUBUNIT BETA-RELATED"/>
    <property type="match status" value="1"/>
</dbReference>
<dbReference type="Pfam" id="PF01077">
    <property type="entry name" value="NIR_SIR"/>
    <property type="match status" value="1"/>
</dbReference>
<dbReference type="Pfam" id="PF03460">
    <property type="entry name" value="NIR_SIR_ferr"/>
    <property type="match status" value="2"/>
</dbReference>
<dbReference type="PRINTS" id="PR00397">
    <property type="entry name" value="SIROHAEM"/>
</dbReference>
<dbReference type="SUPFAM" id="SSF56014">
    <property type="entry name" value="Nitrite and sulphite reductase 4Fe-4S domain-like"/>
    <property type="match status" value="2"/>
</dbReference>
<dbReference type="SUPFAM" id="SSF55124">
    <property type="entry name" value="Nitrite/Sulfite reductase N-terminal domain-like"/>
    <property type="match status" value="2"/>
</dbReference>
<dbReference type="PROSITE" id="PS00365">
    <property type="entry name" value="NIR_SIR"/>
    <property type="match status" value="1"/>
</dbReference>
<accession>C6CAW9</accession>
<reference key="1">
    <citation type="submission" date="2009-06" db="EMBL/GenBank/DDBJ databases">
        <title>Complete sequence of Dickeya dadantii Ech703.</title>
        <authorList>
            <consortium name="US DOE Joint Genome Institute"/>
            <person name="Lucas S."/>
            <person name="Copeland A."/>
            <person name="Lapidus A."/>
            <person name="Glavina del Rio T."/>
            <person name="Dalin E."/>
            <person name="Tice H."/>
            <person name="Bruce D."/>
            <person name="Goodwin L."/>
            <person name="Pitluck S."/>
            <person name="Chertkov O."/>
            <person name="Brettin T."/>
            <person name="Detter J.C."/>
            <person name="Han C."/>
            <person name="Larimer F."/>
            <person name="Land M."/>
            <person name="Hauser L."/>
            <person name="Kyrpides N."/>
            <person name="Mikhailova N."/>
            <person name="Balakrishnan V."/>
            <person name="Glasner J."/>
            <person name="Perna N.T."/>
        </authorList>
    </citation>
    <scope>NUCLEOTIDE SEQUENCE [LARGE SCALE GENOMIC DNA]</scope>
    <source>
        <strain>Ech703</strain>
    </source>
</reference>
<protein>
    <recommendedName>
        <fullName evidence="1">Sulfite reductase [NADPH] hemoprotein beta-component</fullName>
        <shortName evidence="1">SiR-HP</shortName>
        <shortName evidence="1">SiRHP</shortName>
        <ecNumber evidence="1">1.8.1.2</ecNumber>
    </recommendedName>
</protein>
<feature type="chain" id="PRO_0000388482" description="Sulfite reductase [NADPH] hemoprotein beta-component">
    <location>
        <begin position="1"/>
        <end position="571"/>
    </location>
</feature>
<feature type="binding site" evidence="1">
    <location>
        <position position="435"/>
    </location>
    <ligand>
        <name>[4Fe-4S] cluster</name>
        <dbReference type="ChEBI" id="CHEBI:49883"/>
    </ligand>
</feature>
<feature type="binding site" evidence="1">
    <location>
        <position position="441"/>
    </location>
    <ligand>
        <name>[4Fe-4S] cluster</name>
        <dbReference type="ChEBI" id="CHEBI:49883"/>
    </ligand>
</feature>
<feature type="binding site" evidence="1">
    <location>
        <position position="480"/>
    </location>
    <ligand>
        <name>[4Fe-4S] cluster</name>
        <dbReference type="ChEBI" id="CHEBI:49883"/>
    </ligand>
</feature>
<feature type="binding site" evidence="1">
    <location>
        <position position="484"/>
    </location>
    <ligand>
        <name>[4Fe-4S] cluster</name>
        <dbReference type="ChEBI" id="CHEBI:49883"/>
    </ligand>
</feature>
<feature type="binding site" description="axial binding residue" evidence="1">
    <location>
        <position position="484"/>
    </location>
    <ligand>
        <name>siroheme</name>
        <dbReference type="ChEBI" id="CHEBI:60052"/>
    </ligand>
    <ligandPart>
        <name>Fe</name>
        <dbReference type="ChEBI" id="CHEBI:18248"/>
    </ligandPart>
</feature>
<proteinExistence type="inferred from homology"/>
<organism>
    <name type="scientific">Musicola paradisiaca (strain Ech703)</name>
    <name type="common">Dickeya paradisiaca</name>
    <name type="synonym">Dickeya dadantii</name>
    <dbReference type="NCBI Taxonomy" id="579405"/>
    <lineage>
        <taxon>Bacteria</taxon>
        <taxon>Pseudomonadati</taxon>
        <taxon>Pseudomonadota</taxon>
        <taxon>Gammaproteobacteria</taxon>
        <taxon>Enterobacterales</taxon>
        <taxon>Pectobacteriaceae</taxon>
        <taxon>Musicola</taxon>
    </lineage>
</organism>